<feature type="chain" id="PRO_1000191341" description="Transcriptional regulator MraZ">
    <location>
        <begin position="1"/>
        <end position="145"/>
    </location>
</feature>
<feature type="domain" description="SpoVT-AbrB 1" evidence="2">
    <location>
        <begin position="5"/>
        <end position="49"/>
    </location>
</feature>
<feature type="domain" description="SpoVT-AbrB 2" evidence="2">
    <location>
        <begin position="78"/>
        <end position="121"/>
    </location>
</feature>
<protein>
    <recommendedName>
        <fullName>Transcriptional regulator MraZ</fullName>
    </recommendedName>
</protein>
<sequence length="145" mass="16751">MFIGTYNHSIDSKNRMLIPSKVKATLNEVTFVYLSLGFDENIDMRLESEFNQFVDNINNLPIGSREARNLTRLLLSQTYKVEIDSASRILIPQNLIDKAKIKKDIYIIGTNDRYEIWAKEVYDDFSLNQEDTLSDLAEKLLINGI</sequence>
<proteinExistence type="inferred from homology"/>
<organism>
    <name type="scientific">Ureaplasma urealyticum serovar 10 (strain ATCC 33699 / Western)</name>
    <dbReference type="NCBI Taxonomy" id="565575"/>
    <lineage>
        <taxon>Bacteria</taxon>
        <taxon>Bacillati</taxon>
        <taxon>Mycoplasmatota</taxon>
        <taxon>Mycoplasmoidales</taxon>
        <taxon>Mycoplasmoidaceae</taxon>
        <taxon>Ureaplasma</taxon>
    </lineage>
</organism>
<keyword id="KW-0963">Cytoplasm</keyword>
<keyword id="KW-0238">DNA-binding</keyword>
<keyword id="KW-0677">Repeat</keyword>
<keyword id="KW-0804">Transcription</keyword>
<keyword id="KW-0805">Transcription regulation</keyword>
<dbReference type="EMBL" id="CP001184">
    <property type="protein sequence ID" value="ACI60316.1"/>
    <property type="molecule type" value="Genomic_DNA"/>
</dbReference>
<dbReference type="RefSeq" id="WP_004026192.1">
    <property type="nucleotide sequence ID" value="NC_011374.1"/>
</dbReference>
<dbReference type="SMR" id="B5ZBN1"/>
<dbReference type="STRING" id="565575.UUR10_0428"/>
<dbReference type="GeneID" id="93848900"/>
<dbReference type="KEGG" id="uue:UUR10_0428"/>
<dbReference type="eggNOG" id="COG2001">
    <property type="taxonomic scope" value="Bacteria"/>
</dbReference>
<dbReference type="HOGENOM" id="CLU_107907_0_2_14"/>
<dbReference type="OrthoDB" id="9807753at2"/>
<dbReference type="Proteomes" id="UP000002018">
    <property type="component" value="Chromosome"/>
</dbReference>
<dbReference type="GO" id="GO:0005737">
    <property type="term" value="C:cytoplasm"/>
    <property type="evidence" value="ECO:0007669"/>
    <property type="project" value="UniProtKB-UniRule"/>
</dbReference>
<dbReference type="GO" id="GO:0009295">
    <property type="term" value="C:nucleoid"/>
    <property type="evidence" value="ECO:0007669"/>
    <property type="project" value="UniProtKB-SubCell"/>
</dbReference>
<dbReference type="GO" id="GO:0003700">
    <property type="term" value="F:DNA-binding transcription factor activity"/>
    <property type="evidence" value="ECO:0007669"/>
    <property type="project" value="UniProtKB-UniRule"/>
</dbReference>
<dbReference type="GO" id="GO:0000976">
    <property type="term" value="F:transcription cis-regulatory region binding"/>
    <property type="evidence" value="ECO:0007669"/>
    <property type="project" value="TreeGrafter"/>
</dbReference>
<dbReference type="GO" id="GO:2000143">
    <property type="term" value="P:negative regulation of DNA-templated transcription initiation"/>
    <property type="evidence" value="ECO:0007669"/>
    <property type="project" value="TreeGrafter"/>
</dbReference>
<dbReference type="CDD" id="cd16321">
    <property type="entry name" value="MraZ_C"/>
    <property type="match status" value="1"/>
</dbReference>
<dbReference type="CDD" id="cd16320">
    <property type="entry name" value="MraZ_N"/>
    <property type="match status" value="1"/>
</dbReference>
<dbReference type="Gene3D" id="3.40.1550.20">
    <property type="entry name" value="Transcriptional regulator MraZ domain"/>
    <property type="match status" value="1"/>
</dbReference>
<dbReference type="HAMAP" id="MF_01008">
    <property type="entry name" value="MraZ"/>
    <property type="match status" value="1"/>
</dbReference>
<dbReference type="InterPro" id="IPR003444">
    <property type="entry name" value="MraZ"/>
</dbReference>
<dbReference type="InterPro" id="IPR035644">
    <property type="entry name" value="MraZ_C"/>
</dbReference>
<dbReference type="InterPro" id="IPR020603">
    <property type="entry name" value="MraZ_dom"/>
</dbReference>
<dbReference type="InterPro" id="IPR035642">
    <property type="entry name" value="MraZ_N"/>
</dbReference>
<dbReference type="InterPro" id="IPR038619">
    <property type="entry name" value="MraZ_sf"/>
</dbReference>
<dbReference type="InterPro" id="IPR007159">
    <property type="entry name" value="SpoVT-AbrB_dom"/>
</dbReference>
<dbReference type="InterPro" id="IPR037914">
    <property type="entry name" value="SpoVT-AbrB_sf"/>
</dbReference>
<dbReference type="NCBIfam" id="TIGR00242">
    <property type="entry name" value="division/cell wall cluster transcriptional repressor MraZ"/>
    <property type="match status" value="1"/>
</dbReference>
<dbReference type="PANTHER" id="PTHR34701">
    <property type="entry name" value="TRANSCRIPTIONAL REGULATOR MRAZ"/>
    <property type="match status" value="1"/>
</dbReference>
<dbReference type="PANTHER" id="PTHR34701:SF1">
    <property type="entry name" value="TRANSCRIPTIONAL REGULATOR MRAZ"/>
    <property type="match status" value="1"/>
</dbReference>
<dbReference type="Pfam" id="PF02381">
    <property type="entry name" value="MraZ"/>
    <property type="match status" value="2"/>
</dbReference>
<dbReference type="SUPFAM" id="SSF89447">
    <property type="entry name" value="AbrB/MazE/MraZ-like"/>
    <property type="match status" value="1"/>
</dbReference>
<dbReference type="PROSITE" id="PS51740">
    <property type="entry name" value="SPOVT_ABRB"/>
    <property type="match status" value="2"/>
</dbReference>
<name>MRAZ_UREU1</name>
<accession>B5ZBN1</accession>
<gene>
    <name evidence="1" type="primary">mraZ</name>
    <name type="ordered locus">UUR10_0428</name>
</gene>
<comment type="subunit">
    <text evidence="1">Forms oligomers.</text>
</comment>
<comment type="subcellular location">
    <subcellularLocation>
        <location evidence="1">Cytoplasm</location>
        <location evidence="1">Nucleoid</location>
    </subcellularLocation>
</comment>
<comment type="similarity">
    <text evidence="1">Belongs to the MraZ family.</text>
</comment>
<evidence type="ECO:0000255" key="1">
    <source>
        <dbReference type="HAMAP-Rule" id="MF_01008"/>
    </source>
</evidence>
<evidence type="ECO:0000255" key="2">
    <source>
        <dbReference type="PROSITE-ProRule" id="PRU01076"/>
    </source>
</evidence>
<reference key="1">
    <citation type="submission" date="2008-10" db="EMBL/GenBank/DDBJ databases">
        <title>Genome sequence of Ureaplasma urealyticum serovar 10 ATCC-33699.</title>
        <authorList>
            <person name="Shrivastava S."/>
            <person name="Methe B.A."/>
            <person name="Glass J."/>
            <person name="White K."/>
            <person name="Duffy L.B."/>
        </authorList>
    </citation>
    <scope>NUCLEOTIDE SEQUENCE [LARGE SCALE GENOMIC DNA]</scope>
    <source>
        <strain>ATCC 33699 / Western</strain>
    </source>
</reference>